<gene>
    <name type="ordered locus">Ccel_0243</name>
</gene>
<keyword id="KW-0963">Cytoplasm</keyword>
<keyword id="KW-0238">DNA-binding</keyword>
<keyword id="KW-1185">Reference proteome</keyword>
<evidence type="ECO:0000255" key="1">
    <source>
        <dbReference type="HAMAP-Rule" id="MF_00274"/>
    </source>
</evidence>
<proteinExistence type="inferred from homology"/>
<reference key="1">
    <citation type="submission" date="2009-01" db="EMBL/GenBank/DDBJ databases">
        <title>Complete sequence of Clostridium cellulolyticum H10.</title>
        <authorList>
            <consortium name="US DOE Joint Genome Institute"/>
            <person name="Lucas S."/>
            <person name="Copeland A."/>
            <person name="Lapidus A."/>
            <person name="Glavina del Rio T."/>
            <person name="Dalin E."/>
            <person name="Tice H."/>
            <person name="Bruce D."/>
            <person name="Goodwin L."/>
            <person name="Pitluck S."/>
            <person name="Chertkov O."/>
            <person name="Saunders E."/>
            <person name="Brettin T."/>
            <person name="Detter J.C."/>
            <person name="Han C."/>
            <person name="Larimer F."/>
            <person name="Land M."/>
            <person name="Hauser L."/>
            <person name="Kyrpides N."/>
            <person name="Ivanova N."/>
            <person name="Zhou J."/>
            <person name="Richardson P."/>
        </authorList>
    </citation>
    <scope>NUCLEOTIDE SEQUENCE [LARGE SCALE GENOMIC DNA]</scope>
    <source>
        <strain>ATCC 35319 / DSM 5812 / JCM 6584 / H10</strain>
    </source>
</reference>
<name>Y243_RUMCH</name>
<accession>B8I550</accession>
<comment type="function">
    <text evidence="1">Binds to DNA and alters its conformation. May be involved in regulation of gene expression, nucleoid organization and DNA protection.</text>
</comment>
<comment type="subunit">
    <text evidence="1">Homodimer.</text>
</comment>
<comment type="subcellular location">
    <subcellularLocation>
        <location evidence="1">Cytoplasm</location>
        <location evidence="1">Nucleoid</location>
    </subcellularLocation>
</comment>
<comment type="similarity">
    <text evidence="1">Belongs to the YbaB/EbfC family.</text>
</comment>
<dbReference type="EMBL" id="CP001348">
    <property type="protein sequence ID" value="ACL74630.1"/>
    <property type="molecule type" value="Genomic_DNA"/>
</dbReference>
<dbReference type="RefSeq" id="WP_012634695.1">
    <property type="nucleotide sequence ID" value="NC_011898.1"/>
</dbReference>
<dbReference type="SMR" id="B8I550"/>
<dbReference type="STRING" id="394503.Ccel_0243"/>
<dbReference type="KEGG" id="cce:Ccel_0243"/>
<dbReference type="eggNOG" id="COG0718">
    <property type="taxonomic scope" value="Bacteria"/>
</dbReference>
<dbReference type="HOGENOM" id="CLU_140930_1_0_9"/>
<dbReference type="OrthoDB" id="9795263at2"/>
<dbReference type="Proteomes" id="UP000001349">
    <property type="component" value="Chromosome"/>
</dbReference>
<dbReference type="GO" id="GO:0043590">
    <property type="term" value="C:bacterial nucleoid"/>
    <property type="evidence" value="ECO:0007669"/>
    <property type="project" value="UniProtKB-UniRule"/>
</dbReference>
<dbReference type="GO" id="GO:0005829">
    <property type="term" value="C:cytosol"/>
    <property type="evidence" value="ECO:0007669"/>
    <property type="project" value="TreeGrafter"/>
</dbReference>
<dbReference type="GO" id="GO:0003677">
    <property type="term" value="F:DNA binding"/>
    <property type="evidence" value="ECO:0007669"/>
    <property type="project" value="UniProtKB-UniRule"/>
</dbReference>
<dbReference type="FunFam" id="3.30.1310.10:FF:000002">
    <property type="entry name" value="Nucleoid-associated protein IKC_06587"/>
    <property type="match status" value="1"/>
</dbReference>
<dbReference type="Gene3D" id="3.30.1310.10">
    <property type="entry name" value="Nucleoid-associated protein YbaB-like domain"/>
    <property type="match status" value="1"/>
</dbReference>
<dbReference type="HAMAP" id="MF_00274">
    <property type="entry name" value="DNA_YbaB_EbfC"/>
    <property type="match status" value="1"/>
</dbReference>
<dbReference type="InterPro" id="IPR036894">
    <property type="entry name" value="YbaB-like_sf"/>
</dbReference>
<dbReference type="InterPro" id="IPR004401">
    <property type="entry name" value="YbaB/EbfC"/>
</dbReference>
<dbReference type="NCBIfam" id="TIGR00103">
    <property type="entry name" value="DNA_YbaB_EbfC"/>
    <property type="match status" value="1"/>
</dbReference>
<dbReference type="PANTHER" id="PTHR33449">
    <property type="entry name" value="NUCLEOID-ASSOCIATED PROTEIN YBAB"/>
    <property type="match status" value="1"/>
</dbReference>
<dbReference type="PANTHER" id="PTHR33449:SF1">
    <property type="entry name" value="NUCLEOID-ASSOCIATED PROTEIN YBAB"/>
    <property type="match status" value="1"/>
</dbReference>
<dbReference type="Pfam" id="PF02575">
    <property type="entry name" value="YbaB_DNA_bd"/>
    <property type="match status" value="1"/>
</dbReference>
<dbReference type="PIRSF" id="PIRSF004555">
    <property type="entry name" value="UCP004555"/>
    <property type="match status" value="1"/>
</dbReference>
<dbReference type="SUPFAM" id="SSF82607">
    <property type="entry name" value="YbaB-like"/>
    <property type="match status" value="1"/>
</dbReference>
<sequence length="115" mass="12207">MARGGFPGGGFGGNMNNLMKQAQKMQKDMEKAQQDLENKTIEVSVGGGAINIVATGKKEIKEITIKPEVVDPDDVEMLQDLILSAVNEALRKADELANSEMSKITGGLGGLPGMF</sequence>
<organism>
    <name type="scientific">Ruminiclostridium cellulolyticum (strain ATCC 35319 / DSM 5812 / JCM 6584 / H10)</name>
    <name type="common">Clostridium cellulolyticum</name>
    <dbReference type="NCBI Taxonomy" id="394503"/>
    <lineage>
        <taxon>Bacteria</taxon>
        <taxon>Bacillati</taxon>
        <taxon>Bacillota</taxon>
        <taxon>Clostridia</taxon>
        <taxon>Eubacteriales</taxon>
        <taxon>Oscillospiraceae</taxon>
        <taxon>Ruminiclostridium</taxon>
    </lineage>
</organism>
<protein>
    <recommendedName>
        <fullName evidence="1">Nucleoid-associated protein Ccel_0243</fullName>
    </recommendedName>
</protein>
<feature type="chain" id="PRO_1000197652" description="Nucleoid-associated protein Ccel_0243">
    <location>
        <begin position="1"/>
        <end position="115"/>
    </location>
</feature>